<sequence>MAKYTKEDIINLVKENGVKFIRLQFTDIFGTLKNVAITDKQLEKALDNECMFDGSSIDGFVRIEESDMNLRPNLDSFVIFPWRPQQGKVARLICDVYKPDGTPFEGDPRHVLKRANADAKELGYTMNVGPECEFFLFETDENGRATTNTQDKAGYFDLAPTDLGENARRDMTLALEEMGFEIEASHHEVAEGQNEIDFKYGDALTTADNIMTFKLVVKSIAQRHGLHASFMPKPIFGINGSGMHVNMSLFKDGKNAFVDENDKNGLSKVAYQFIAGLLKNIKGMAAVTNPLVNSYKRLVPGYEAPVYLAWSCKNRTALIRVPAARGAGTRVELRCPDPSSNPYLVLACLLQAGLDGIKNNLQPPAEVEANIFAMTEQERKENGIDNLPNNLYEAVNYMKENELAKKALGDHVYGNYVAGKAAEWDDYRTKVHDWELENYLNKY</sequence>
<organism>
    <name type="scientific">Clostridium saccharobutylicum</name>
    <dbReference type="NCBI Taxonomy" id="169679"/>
    <lineage>
        <taxon>Bacteria</taxon>
        <taxon>Bacillati</taxon>
        <taxon>Bacillota</taxon>
        <taxon>Clostridia</taxon>
        <taxon>Eubacteriales</taxon>
        <taxon>Clostridiaceae</taxon>
        <taxon>Clostridium</taxon>
    </lineage>
</organism>
<accession>P10656</accession>
<dbReference type="EC" id="6.3.1.2" evidence="2"/>
<dbReference type="EMBL" id="M18966">
    <property type="protein sequence ID" value="AAA23241.1"/>
    <property type="molecule type" value="Genomic_DNA"/>
</dbReference>
<dbReference type="PIR" id="A28676">
    <property type="entry name" value="AJCLQA"/>
</dbReference>
<dbReference type="SMR" id="P10656"/>
<dbReference type="STRING" id="169679.CSACC_11560"/>
<dbReference type="GO" id="GO:0005737">
    <property type="term" value="C:cytoplasm"/>
    <property type="evidence" value="ECO:0007669"/>
    <property type="project" value="UniProtKB-SubCell"/>
</dbReference>
<dbReference type="GO" id="GO:0005524">
    <property type="term" value="F:ATP binding"/>
    <property type="evidence" value="ECO:0007669"/>
    <property type="project" value="UniProtKB-KW"/>
</dbReference>
<dbReference type="GO" id="GO:0004356">
    <property type="term" value="F:glutamine synthetase activity"/>
    <property type="evidence" value="ECO:0007669"/>
    <property type="project" value="UniProtKB-EC"/>
</dbReference>
<dbReference type="GO" id="GO:0046872">
    <property type="term" value="F:metal ion binding"/>
    <property type="evidence" value="ECO:0007669"/>
    <property type="project" value="UniProtKB-KW"/>
</dbReference>
<dbReference type="GO" id="GO:0006542">
    <property type="term" value="P:glutamine biosynthetic process"/>
    <property type="evidence" value="ECO:0007669"/>
    <property type="project" value="InterPro"/>
</dbReference>
<dbReference type="FunFam" id="3.10.20.70:FF:000005">
    <property type="entry name" value="Glutamine synthetase"/>
    <property type="match status" value="1"/>
</dbReference>
<dbReference type="FunFam" id="3.30.590.10:FF:000003">
    <property type="entry name" value="Glutamine synthetase 2"/>
    <property type="match status" value="1"/>
</dbReference>
<dbReference type="Gene3D" id="3.10.20.70">
    <property type="entry name" value="Glutamine synthetase, N-terminal domain"/>
    <property type="match status" value="1"/>
</dbReference>
<dbReference type="Gene3D" id="3.30.590.10">
    <property type="entry name" value="Glutamine synthetase/guanido kinase, catalytic domain"/>
    <property type="match status" value="1"/>
</dbReference>
<dbReference type="InterPro" id="IPR008147">
    <property type="entry name" value="Gln_synt_N"/>
</dbReference>
<dbReference type="InterPro" id="IPR036651">
    <property type="entry name" value="Gln_synt_N_sf"/>
</dbReference>
<dbReference type="InterPro" id="IPR014746">
    <property type="entry name" value="Gln_synth/guanido_kin_cat_dom"/>
</dbReference>
<dbReference type="InterPro" id="IPR008146">
    <property type="entry name" value="Gln_synth_cat_dom"/>
</dbReference>
<dbReference type="InterPro" id="IPR027303">
    <property type="entry name" value="Gln_synth_gly_rich_site"/>
</dbReference>
<dbReference type="InterPro" id="IPR004809">
    <property type="entry name" value="Gln_synth_I"/>
</dbReference>
<dbReference type="InterPro" id="IPR027302">
    <property type="entry name" value="Gln_synth_N_conserv_site"/>
</dbReference>
<dbReference type="NCBIfam" id="TIGR00653">
    <property type="entry name" value="GlnA"/>
    <property type="match status" value="1"/>
</dbReference>
<dbReference type="PANTHER" id="PTHR43785">
    <property type="entry name" value="GAMMA-GLUTAMYLPUTRESCINE SYNTHETASE"/>
    <property type="match status" value="1"/>
</dbReference>
<dbReference type="PANTHER" id="PTHR43785:SF12">
    <property type="entry name" value="TYPE-1 GLUTAMINE SYNTHETASE 2"/>
    <property type="match status" value="1"/>
</dbReference>
<dbReference type="Pfam" id="PF00120">
    <property type="entry name" value="Gln-synt_C"/>
    <property type="match status" value="1"/>
</dbReference>
<dbReference type="Pfam" id="PF03951">
    <property type="entry name" value="Gln-synt_N"/>
    <property type="match status" value="1"/>
</dbReference>
<dbReference type="SMART" id="SM01230">
    <property type="entry name" value="Gln-synt_C"/>
    <property type="match status" value="1"/>
</dbReference>
<dbReference type="SUPFAM" id="SSF54368">
    <property type="entry name" value="Glutamine synthetase, N-terminal domain"/>
    <property type="match status" value="1"/>
</dbReference>
<dbReference type="SUPFAM" id="SSF55931">
    <property type="entry name" value="Glutamine synthetase/guanido kinase"/>
    <property type="match status" value="1"/>
</dbReference>
<dbReference type="PROSITE" id="PS00180">
    <property type="entry name" value="GLNA_1"/>
    <property type="match status" value="1"/>
</dbReference>
<dbReference type="PROSITE" id="PS00181">
    <property type="entry name" value="GLNA_ATP"/>
    <property type="match status" value="1"/>
</dbReference>
<dbReference type="PROSITE" id="PS51986">
    <property type="entry name" value="GS_BETA_GRASP"/>
    <property type="match status" value="1"/>
</dbReference>
<dbReference type="PROSITE" id="PS51987">
    <property type="entry name" value="GS_CATALYTIC"/>
    <property type="match status" value="1"/>
</dbReference>
<proteinExistence type="inferred from homology"/>
<gene>
    <name evidence="7" type="primary">glnA</name>
</gene>
<keyword id="KW-0067">ATP-binding</keyword>
<keyword id="KW-0963">Cytoplasm</keyword>
<keyword id="KW-0436">Ligase</keyword>
<keyword id="KW-0460">Magnesium</keyword>
<keyword id="KW-0479">Metal-binding</keyword>
<keyword id="KW-0547">Nucleotide-binding</keyword>
<feature type="chain" id="PRO_0000153234" description="Glutamine synthetase">
    <location>
        <begin position="1"/>
        <end position="443"/>
    </location>
</feature>
<feature type="domain" description="GS beta-grasp" evidence="5">
    <location>
        <begin position="16"/>
        <end position="101"/>
    </location>
</feature>
<feature type="domain" description="GS catalytic" evidence="6">
    <location>
        <begin position="108"/>
        <end position="443"/>
    </location>
</feature>
<feature type="binding site" evidence="2">
    <location>
        <position position="131"/>
    </location>
    <ligand>
        <name>Mg(2+)</name>
        <dbReference type="ChEBI" id="CHEBI:18420"/>
        <label>1</label>
    </ligand>
</feature>
<feature type="binding site" evidence="2">
    <location>
        <position position="133"/>
    </location>
    <ligand>
        <name>Mg(2+)</name>
        <dbReference type="ChEBI" id="CHEBI:18420"/>
        <label>2</label>
    </ligand>
</feature>
<feature type="binding site" evidence="4">
    <location>
        <position position="183"/>
    </location>
    <ligand>
        <name>ATP</name>
        <dbReference type="ChEBI" id="CHEBI:30616"/>
    </ligand>
</feature>
<feature type="binding site" evidence="2">
    <location>
        <position position="188"/>
    </location>
    <ligand>
        <name>Mg(2+)</name>
        <dbReference type="ChEBI" id="CHEBI:18420"/>
        <label>2</label>
    </ligand>
</feature>
<feature type="binding site" evidence="2">
    <location>
        <position position="195"/>
    </location>
    <ligand>
        <name>Mg(2+)</name>
        <dbReference type="ChEBI" id="CHEBI:18420"/>
        <label>2</label>
    </ligand>
</feature>
<feature type="binding site" evidence="4">
    <location>
        <begin position="239"/>
        <end position="240"/>
    </location>
    <ligand>
        <name>L-glutamate</name>
        <dbReference type="ChEBI" id="CHEBI:29985"/>
    </ligand>
</feature>
<feature type="binding site" evidence="2">
    <location>
        <position position="240"/>
    </location>
    <ligand>
        <name>L-glutamate</name>
        <dbReference type="ChEBI" id="CHEBI:29985"/>
    </ligand>
</feature>
<feature type="binding site" evidence="2">
    <location>
        <position position="244"/>
    </location>
    <ligand>
        <name>Mg(2+)</name>
        <dbReference type="ChEBI" id="CHEBI:18420"/>
        <label>1</label>
    </ligand>
</feature>
<feature type="binding site" evidence="3">
    <location>
        <position position="248"/>
    </location>
    <ligand>
        <name>ATP</name>
        <dbReference type="ChEBI" id="CHEBI:30616"/>
    </ligand>
</feature>
<feature type="binding site" evidence="1">
    <location>
        <position position="297"/>
    </location>
    <ligand>
        <name>L-glutamate</name>
        <dbReference type="ChEBI" id="CHEBI:29985"/>
    </ligand>
</feature>
<feature type="binding site" evidence="1">
    <location>
        <position position="303"/>
    </location>
    <ligand>
        <name>L-glutamate</name>
        <dbReference type="ChEBI" id="CHEBI:29985"/>
    </ligand>
</feature>
<feature type="binding site" evidence="4">
    <location>
        <position position="315"/>
    </location>
    <ligand>
        <name>ATP</name>
        <dbReference type="ChEBI" id="CHEBI:30616"/>
    </ligand>
</feature>
<feature type="binding site" evidence="4">
    <location>
        <position position="315"/>
    </location>
    <ligand>
        <name>L-glutamate</name>
        <dbReference type="ChEBI" id="CHEBI:29985"/>
    </ligand>
</feature>
<feature type="binding site" evidence="4">
    <location>
        <position position="320"/>
    </location>
    <ligand>
        <name>ATP</name>
        <dbReference type="ChEBI" id="CHEBI:30616"/>
    </ligand>
</feature>
<feature type="binding site" evidence="2">
    <location>
        <position position="332"/>
    </location>
    <ligand>
        <name>Mg(2+)</name>
        <dbReference type="ChEBI" id="CHEBI:18420"/>
        <label>1</label>
    </ligand>
</feature>
<feature type="binding site" evidence="1">
    <location>
        <position position="334"/>
    </location>
    <ligand>
        <name>L-glutamate</name>
        <dbReference type="ChEBI" id="CHEBI:29985"/>
    </ligand>
</feature>
<feature type="site" description="Important for inhibition by glutamine" evidence="2">
    <location>
        <position position="62"/>
    </location>
</feature>
<protein>
    <recommendedName>
        <fullName evidence="7">Glutamine synthetase</fullName>
        <shortName evidence="7">GS</shortName>
        <ecNumber evidence="2">6.3.1.2</ecNumber>
    </recommendedName>
    <alternativeName>
        <fullName evidence="2">Glutamate--ammonia ligase</fullName>
    </alternativeName>
    <alternativeName>
        <fullName evidence="2">Glutamine synthetase I alpha</fullName>
        <shortName evidence="2">GSI alpha</shortName>
    </alternativeName>
</protein>
<comment type="function">
    <text evidence="2">Glutamine synthetase (GS) is an unusual multitasking protein that functions as an enzyme, a transcription coregulator, and a chaperone in ammonium assimilation and in the regulation of genes involved in nitrogen metabolism. It catalyzes the ATP-dependent biosynthesis of glutamine from glutamate and ammonia. Feedback-inhibited GlnA also interacts with and regulates the activity of the transcriptional regulator TnrA. During nitrogen limitation, TnrA is in its DNA-binding active state and turns on the transcription of genes required for nitrogen assimilation. Under conditions of nitrogen excess, feedback-inhibited GlnA forms a stable complex with TnrA, which inhibits its DNA-binding activity. In contrast, feedback-inhibited GlnA acts as a chaperone to stabilize the DNA-binding activity of GlnR, which represses the transcription of nitrogen assimilation genes.</text>
</comment>
<comment type="catalytic activity">
    <reaction evidence="2">
        <text>L-glutamate + NH4(+) + ATP = L-glutamine + ADP + phosphate + H(+)</text>
        <dbReference type="Rhea" id="RHEA:16169"/>
        <dbReference type="ChEBI" id="CHEBI:15378"/>
        <dbReference type="ChEBI" id="CHEBI:28938"/>
        <dbReference type="ChEBI" id="CHEBI:29985"/>
        <dbReference type="ChEBI" id="CHEBI:30616"/>
        <dbReference type="ChEBI" id="CHEBI:43474"/>
        <dbReference type="ChEBI" id="CHEBI:58359"/>
        <dbReference type="ChEBI" id="CHEBI:456216"/>
        <dbReference type="EC" id="6.3.1.2"/>
    </reaction>
</comment>
<comment type="cofactor">
    <cofactor evidence="2">
        <name>Mg(2+)</name>
        <dbReference type="ChEBI" id="CHEBI:18420"/>
    </cofactor>
    <text evidence="2">Binds 2 Mg(2+) ions per subunit.</text>
</comment>
<comment type="activity regulation">
    <text evidence="2">Inhibited by glutamine.</text>
</comment>
<comment type="subunit">
    <text evidence="2">Oligomer of 12 subunits arranged in the form of two hexagons. In its feedback-inhibited form, interacts with TnrA in order to block its DNA-binding activity.</text>
</comment>
<comment type="subcellular location">
    <subcellularLocation>
        <location evidence="2">Cytoplasm</location>
    </subcellularLocation>
</comment>
<comment type="similarity">
    <text evidence="5">Belongs to the glutamine synthetase family.</text>
</comment>
<comment type="caution">
    <text evidence="8">Was originally thought to originate from C.acetobutylicum.</text>
</comment>
<comment type="caution">
    <text evidence="8">Lacks the tyrosine conserved in bacteria and other archaea, involved in feedback inhibition.</text>
</comment>
<name>GLN1A_CLOSA</name>
<evidence type="ECO:0000250" key="1">
    <source>
        <dbReference type="UniProtKB" id="P0A1P6"/>
    </source>
</evidence>
<evidence type="ECO:0000250" key="2">
    <source>
        <dbReference type="UniProtKB" id="P12425"/>
    </source>
</evidence>
<evidence type="ECO:0000250" key="3">
    <source>
        <dbReference type="UniProtKB" id="P77961"/>
    </source>
</evidence>
<evidence type="ECO:0000250" key="4">
    <source>
        <dbReference type="UniProtKB" id="P9WN39"/>
    </source>
</evidence>
<evidence type="ECO:0000255" key="5">
    <source>
        <dbReference type="PROSITE-ProRule" id="PRU01330"/>
    </source>
</evidence>
<evidence type="ECO:0000255" key="6">
    <source>
        <dbReference type="PROSITE-ProRule" id="PRU01331"/>
    </source>
</evidence>
<evidence type="ECO:0000303" key="7">
    <source>
    </source>
</evidence>
<evidence type="ECO:0000305" key="8"/>
<reference key="1">
    <citation type="journal article" date="1988" name="J. Bacteriol.">
        <title>Molecular analysis and regulation of the glnA gene of the Gram-positive anaerobe Clostridium acetobutylicum.</title>
        <authorList>
            <person name="Janssen P.J."/>
            <person name="Jones W.A."/>
            <person name="Jones D.T."/>
            <person name="Woods D.R."/>
        </authorList>
    </citation>
    <scope>NUCLEOTIDE SEQUENCE [GENOMIC DNA]</scope>
    <source>
        <strain>ATCC BAA-117 / DSM 13864 / NCP 262</strain>
    </source>
</reference>
<reference key="2">
    <citation type="journal article" date="1990" name="Mol. Microbiol.">
        <title>Studies on Clostridium acetobutylicum glnA promoters and antisense RNA.</title>
        <authorList>
            <person name="Janssen P.J."/>
            <person name="Jones D.T."/>
            <person name="Woods D.R."/>
        </authorList>
    </citation>
    <scope>NUCLEOTIDE SEQUENCE [GENOMIC DNA] OF 1-38</scope>
</reference>